<dbReference type="EC" id="1.1.1.85" evidence="1"/>
<dbReference type="EMBL" id="CP000142">
    <property type="protein sequence ID" value="ABA89145.1"/>
    <property type="molecule type" value="Genomic_DNA"/>
</dbReference>
<dbReference type="RefSeq" id="WP_011341649.1">
    <property type="nucleotide sequence ID" value="NC_007498.2"/>
</dbReference>
<dbReference type="SMR" id="Q3A3B2"/>
<dbReference type="STRING" id="338963.Pcar_1904"/>
<dbReference type="KEGG" id="pca:Pcar_1904"/>
<dbReference type="eggNOG" id="COG0473">
    <property type="taxonomic scope" value="Bacteria"/>
</dbReference>
<dbReference type="HOGENOM" id="CLU_031953_0_3_7"/>
<dbReference type="OrthoDB" id="9806254at2"/>
<dbReference type="UniPathway" id="UPA00048">
    <property type="reaction ID" value="UER00072"/>
</dbReference>
<dbReference type="Proteomes" id="UP000002534">
    <property type="component" value="Chromosome"/>
</dbReference>
<dbReference type="GO" id="GO:0005829">
    <property type="term" value="C:cytosol"/>
    <property type="evidence" value="ECO:0007669"/>
    <property type="project" value="TreeGrafter"/>
</dbReference>
<dbReference type="GO" id="GO:0003862">
    <property type="term" value="F:3-isopropylmalate dehydrogenase activity"/>
    <property type="evidence" value="ECO:0007669"/>
    <property type="project" value="UniProtKB-UniRule"/>
</dbReference>
<dbReference type="GO" id="GO:0000287">
    <property type="term" value="F:magnesium ion binding"/>
    <property type="evidence" value="ECO:0007669"/>
    <property type="project" value="InterPro"/>
</dbReference>
<dbReference type="GO" id="GO:0051287">
    <property type="term" value="F:NAD binding"/>
    <property type="evidence" value="ECO:0007669"/>
    <property type="project" value="InterPro"/>
</dbReference>
<dbReference type="GO" id="GO:0009098">
    <property type="term" value="P:L-leucine biosynthetic process"/>
    <property type="evidence" value="ECO:0007669"/>
    <property type="project" value="UniProtKB-UniRule"/>
</dbReference>
<dbReference type="FunFam" id="3.40.718.10:FF:000004">
    <property type="entry name" value="3-isopropylmalate dehydrogenase"/>
    <property type="match status" value="1"/>
</dbReference>
<dbReference type="Gene3D" id="3.40.718.10">
    <property type="entry name" value="Isopropylmalate Dehydrogenase"/>
    <property type="match status" value="1"/>
</dbReference>
<dbReference type="HAMAP" id="MF_01033">
    <property type="entry name" value="LeuB_type1"/>
    <property type="match status" value="1"/>
</dbReference>
<dbReference type="InterPro" id="IPR019818">
    <property type="entry name" value="IsoCit/isopropylmalate_DH_CS"/>
</dbReference>
<dbReference type="InterPro" id="IPR024084">
    <property type="entry name" value="IsoPropMal-DH-like_dom"/>
</dbReference>
<dbReference type="InterPro" id="IPR004429">
    <property type="entry name" value="Isopropylmalate_DH"/>
</dbReference>
<dbReference type="NCBIfam" id="TIGR00169">
    <property type="entry name" value="leuB"/>
    <property type="match status" value="1"/>
</dbReference>
<dbReference type="PANTHER" id="PTHR42979">
    <property type="entry name" value="3-ISOPROPYLMALATE DEHYDROGENASE"/>
    <property type="match status" value="1"/>
</dbReference>
<dbReference type="PANTHER" id="PTHR42979:SF1">
    <property type="entry name" value="3-ISOPROPYLMALATE DEHYDROGENASE"/>
    <property type="match status" value="1"/>
</dbReference>
<dbReference type="Pfam" id="PF00180">
    <property type="entry name" value="Iso_dh"/>
    <property type="match status" value="1"/>
</dbReference>
<dbReference type="SMART" id="SM01329">
    <property type="entry name" value="Iso_dh"/>
    <property type="match status" value="1"/>
</dbReference>
<dbReference type="SUPFAM" id="SSF53659">
    <property type="entry name" value="Isocitrate/Isopropylmalate dehydrogenase-like"/>
    <property type="match status" value="1"/>
</dbReference>
<dbReference type="PROSITE" id="PS00470">
    <property type="entry name" value="IDH_IMDH"/>
    <property type="match status" value="1"/>
</dbReference>
<name>LEU3_SYNC1</name>
<gene>
    <name evidence="1" type="primary">leuB</name>
    <name type="ordered locus">Pcar_1904</name>
</gene>
<protein>
    <recommendedName>
        <fullName evidence="1">3-isopropylmalate dehydrogenase</fullName>
        <ecNumber evidence="1">1.1.1.85</ecNumber>
    </recommendedName>
    <alternativeName>
        <fullName evidence="1">3-IPM-DH</fullName>
    </alternativeName>
    <alternativeName>
        <fullName evidence="1">Beta-IPM dehydrogenase</fullName>
        <shortName evidence="1">IMDH</shortName>
    </alternativeName>
</protein>
<evidence type="ECO:0000255" key="1">
    <source>
        <dbReference type="HAMAP-Rule" id="MF_01033"/>
    </source>
</evidence>
<organism>
    <name type="scientific">Syntrophotalea carbinolica (strain DSM 2380 / NBRC 103641 / GraBd1)</name>
    <name type="common">Pelobacter carbinolicus</name>
    <dbReference type="NCBI Taxonomy" id="338963"/>
    <lineage>
        <taxon>Bacteria</taxon>
        <taxon>Pseudomonadati</taxon>
        <taxon>Thermodesulfobacteriota</taxon>
        <taxon>Desulfuromonadia</taxon>
        <taxon>Desulfuromonadales</taxon>
        <taxon>Syntrophotaleaceae</taxon>
        <taxon>Syntrophotalea</taxon>
    </lineage>
</organism>
<proteinExistence type="inferred from homology"/>
<feature type="chain" id="PRO_0000083719" description="3-isopropylmalate dehydrogenase">
    <location>
        <begin position="1"/>
        <end position="365"/>
    </location>
</feature>
<feature type="binding site" evidence="1">
    <location>
        <begin position="78"/>
        <end position="91"/>
    </location>
    <ligand>
        <name>NAD(+)</name>
        <dbReference type="ChEBI" id="CHEBI:57540"/>
    </ligand>
</feature>
<feature type="binding site" evidence="1">
    <location>
        <position position="99"/>
    </location>
    <ligand>
        <name>substrate</name>
    </ligand>
</feature>
<feature type="binding site" evidence="1">
    <location>
        <position position="109"/>
    </location>
    <ligand>
        <name>substrate</name>
    </ligand>
</feature>
<feature type="binding site" evidence="1">
    <location>
        <position position="138"/>
    </location>
    <ligand>
        <name>substrate</name>
    </ligand>
</feature>
<feature type="binding site" evidence="1">
    <location>
        <position position="227"/>
    </location>
    <ligand>
        <name>Mg(2+)</name>
        <dbReference type="ChEBI" id="CHEBI:18420"/>
    </ligand>
</feature>
<feature type="binding site" evidence="1">
    <location>
        <position position="227"/>
    </location>
    <ligand>
        <name>substrate</name>
    </ligand>
</feature>
<feature type="binding site" evidence="1">
    <location>
        <position position="251"/>
    </location>
    <ligand>
        <name>Mg(2+)</name>
        <dbReference type="ChEBI" id="CHEBI:18420"/>
    </ligand>
</feature>
<feature type="binding site" evidence="1">
    <location>
        <position position="255"/>
    </location>
    <ligand>
        <name>Mg(2+)</name>
        <dbReference type="ChEBI" id="CHEBI:18420"/>
    </ligand>
</feature>
<feature type="binding site" evidence="1">
    <location>
        <begin position="285"/>
        <end position="297"/>
    </location>
    <ligand>
        <name>NAD(+)</name>
        <dbReference type="ChEBI" id="CHEBI:57540"/>
    </ligand>
</feature>
<feature type="site" description="Important for catalysis" evidence="1">
    <location>
        <position position="145"/>
    </location>
</feature>
<feature type="site" description="Important for catalysis" evidence="1">
    <location>
        <position position="195"/>
    </location>
</feature>
<sequence>MKKEFKLAVLPGDGIGPEIMAEAMKVLDAVEQKFQVRFERQFANVGGAAIDRDGKALPDATVEICQASDAILFGSVGGPKWDTLPAEERPERGALLPLRRIFGLFCNLRPAIVFPALTSASSLKEEVIAGGFDILVVRELTGGIYFAQPKGVEGEGGERRGFDTMAYTDAEVERITRVAFDAARKRGKKLVSIDKANVLSTSVLWREVVERVSADYPDVVLSHMYVDNAAMQLVKAPKQFDVLLCPNMFGDILSDEAAMLTGSLGMLPSASLAEGSFGMYEPAGGSAPDIAGKNIANPVAQILSAAMLLRYSCGLADAADAVEKAVENCLAAGLRTGDIYQDADGEQLVSTSAMGDAVVAELIKS</sequence>
<reference key="1">
    <citation type="submission" date="2005-10" db="EMBL/GenBank/DDBJ databases">
        <title>Complete sequence of Pelobacter carbinolicus DSM 2380.</title>
        <authorList>
            <person name="Copeland A."/>
            <person name="Lucas S."/>
            <person name="Lapidus A."/>
            <person name="Barry K."/>
            <person name="Detter J.C."/>
            <person name="Glavina T."/>
            <person name="Hammon N."/>
            <person name="Israni S."/>
            <person name="Pitluck S."/>
            <person name="Chertkov O."/>
            <person name="Schmutz J."/>
            <person name="Larimer F."/>
            <person name="Land M."/>
            <person name="Kyrpides N."/>
            <person name="Ivanova N."/>
            <person name="Richardson P."/>
        </authorList>
    </citation>
    <scope>NUCLEOTIDE SEQUENCE [LARGE SCALE GENOMIC DNA]</scope>
    <source>
        <strain>DSM 2380 / NBRC 103641 / GraBd1</strain>
    </source>
</reference>
<comment type="function">
    <text evidence="1">Catalyzes the oxidation of 3-carboxy-2-hydroxy-4-methylpentanoate (3-isopropylmalate) to 3-carboxy-4-methyl-2-oxopentanoate. The product decarboxylates to 4-methyl-2 oxopentanoate.</text>
</comment>
<comment type="catalytic activity">
    <reaction evidence="1">
        <text>(2R,3S)-3-isopropylmalate + NAD(+) = 4-methyl-2-oxopentanoate + CO2 + NADH</text>
        <dbReference type="Rhea" id="RHEA:32271"/>
        <dbReference type="ChEBI" id="CHEBI:16526"/>
        <dbReference type="ChEBI" id="CHEBI:17865"/>
        <dbReference type="ChEBI" id="CHEBI:35121"/>
        <dbReference type="ChEBI" id="CHEBI:57540"/>
        <dbReference type="ChEBI" id="CHEBI:57945"/>
        <dbReference type="EC" id="1.1.1.85"/>
    </reaction>
</comment>
<comment type="cofactor">
    <cofactor evidence="1">
        <name>Mg(2+)</name>
        <dbReference type="ChEBI" id="CHEBI:18420"/>
    </cofactor>
    <cofactor evidence="1">
        <name>Mn(2+)</name>
        <dbReference type="ChEBI" id="CHEBI:29035"/>
    </cofactor>
    <text evidence="1">Binds 1 Mg(2+) or Mn(2+) ion per subunit.</text>
</comment>
<comment type="pathway">
    <text evidence="1">Amino-acid biosynthesis; L-leucine biosynthesis; L-leucine from 3-methyl-2-oxobutanoate: step 3/4.</text>
</comment>
<comment type="subunit">
    <text evidence="1">Homodimer.</text>
</comment>
<comment type="subcellular location">
    <subcellularLocation>
        <location evidence="1">Cytoplasm</location>
    </subcellularLocation>
</comment>
<comment type="similarity">
    <text evidence="1">Belongs to the isocitrate and isopropylmalate dehydrogenases family. LeuB type 1 subfamily.</text>
</comment>
<accession>Q3A3B2</accession>
<keyword id="KW-0028">Amino-acid biosynthesis</keyword>
<keyword id="KW-0100">Branched-chain amino acid biosynthesis</keyword>
<keyword id="KW-0963">Cytoplasm</keyword>
<keyword id="KW-0432">Leucine biosynthesis</keyword>
<keyword id="KW-0460">Magnesium</keyword>
<keyword id="KW-0464">Manganese</keyword>
<keyword id="KW-0479">Metal-binding</keyword>
<keyword id="KW-0520">NAD</keyword>
<keyword id="KW-0560">Oxidoreductase</keyword>
<keyword id="KW-1185">Reference proteome</keyword>